<accession>P61744</accession>
<organism>
    <name type="scientific">Mycolicibacterium paratuberculosis (strain ATCC BAA-968 / K-10)</name>
    <name type="common">Mycobacterium paratuberculosis</name>
    <dbReference type="NCBI Taxonomy" id="262316"/>
    <lineage>
        <taxon>Bacteria</taxon>
        <taxon>Bacillati</taxon>
        <taxon>Actinomycetota</taxon>
        <taxon>Actinomycetes</taxon>
        <taxon>Mycobacteriales</taxon>
        <taxon>Mycobacteriaceae</taxon>
        <taxon>Mycobacterium</taxon>
        <taxon>Mycobacterium avium complex (MAC)</taxon>
    </lineage>
</organism>
<reference key="1">
    <citation type="journal article" date="2005" name="Proc. Natl. Acad. Sci. U.S.A.">
        <title>The complete genome sequence of Mycobacterium avium subspecies paratuberculosis.</title>
        <authorList>
            <person name="Li L."/>
            <person name="Bannantine J.P."/>
            <person name="Zhang Q."/>
            <person name="Amonsin A."/>
            <person name="May B.J."/>
            <person name="Alt D."/>
            <person name="Banerji N."/>
            <person name="Kanjilal S."/>
            <person name="Kapur V."/>
        </authorList>
    </citation>
    <scope>NUCLEOTIDE SEQUENCE [LARGE SCALE GENOMIC DNA]</scope>
    <source>
        <strain>ATCC BAA-968 / K-10</strain>
    </source>
</reference>
<protein>
    <recommendedName>
        <fullName evidence="1">Glycerol-3-phosphate dehydrogenase [NAD(P)+] 2</fullName>
        <ecNumber evidence="1">1.1.1.94</ecNumber>
    </recommendedName>
    <alternativeName>
        <fullName evidence="1">NAD(P)(+)-dependent glycerol-3-phosphate dehydrogenase 2</fullName>
    </alternativeName>
    <alternativeName>
        <fullName evidence="1">NAD(P)H-dependent dihydroxyacetone-phosphate reductase 2</fullName>
    </alternativeName>
</protein>
<proteinExistence type="inferred from homology"/>
<sequence>MAAQMREPKVVVLGGGSWGTTVASICARRGPTLQWVRSRETADDINENHRNSRYLGNDVVLSDTLRATTDFCEAANTADVVVTGVPSHGFRGVLTELARELRPWVPVVSLVKGLEQGTNMRMSQIVEEVLPGHPAGILAGPNIAREVAEGYAAAAVLAMPDQHLATRLSGLFRTRRFRVYTTDDVVGAEMAGALKNVFAIAVGMGYSLGIALVIARALREMTKLGVAMGGSPDTFPGLAGLGDLIVTCTSQRSRNRHVGEQLGAGKPIDEIIASMNQVAEGVKAASVIMEFGLTMPIAREVDAVINHGSTVEQAYRGLIAEVPGHEVHGSGF</sequence>
<evidence type="ECO:0000255" key="1">
    <source>
        <dbReference type="HAMAP-Rule" id="MF_00394"/>
    </source>
</evidence>
<name>GPDA2_MYCPA</name>
<feature type="chain" id="PRO_0000137994" description="Glycerol-3-phosphate dehydrogenase [NAD(P)+] 2">
    <location>
        <begin position="1"/>
        <end position="332"/>
    </location>
</feature>
<feature type="active site" description="Proton acceptor" evidence="1">
    <location>
        <position position="195"/>
    </location>
</feature>
<feature type="binding site" evidence="1">
    <location>
        <position position="17"/>
    </location>
    <ligand>
        <name>NADPH</name>
        <dbReference type="ChEBI" id="CHEBI:57783"/>
    </ligand>
</feature>
<feature type="binding site" evidence="1">
    <location>
        <position position="18"/>
    </location>
    <ligand>
        <name>NADPH</name>
        <dbReference type="ChEBI" id="CHEBI:57783"/>
    </ligand>
</feature>
<feature type="binding site" evidence="1">
    <location>
        <position position="37"/>
    </location>
    <ligand>
        <name>NADPH</name>
        <dbReference type="ChEBI" id="CHEBI:57783"/>
    </ligand>
</feature>
<feature type="binding site" evidence="1">
    <location>
        <position position="112"/>
    </location>
    <ligand>
        <name>NADPH</name>
        <dbReference type="ChEBI" id="CHEBI:57783"/>
    </ligand>
</feature>
<feature type="binding site" evidence="1">
    <location>
        <position position="112"/>
    </location>
    <ligand>
        <name>sn-glycerol 3-phosphate</name>
        <dbReference type="ChEBI" id="CHEBI:57597"/>
    </ligand>
</feature>
<feature type="binding site" evidence="1">
    <location>
        <position position="140"/>
    </location>
    <ligand>
        <name>sn-glycerol 3-phosphate</name>
        <dbReference type="ChEBI" id="CHEBI:57597"/>
    </ligand>
</feature>
<feature type="binding site" evidence="1">
    <location>
        <position position="144"/>
    </location>
    <ligand>
        <name>NADPH</name>
        <dbReference type="ChEBI" id="CHEBI:57783"/>
    </ligand>
</feature>
<feature type="binding site" evidence="1">
    <location>
        <position position="195"/>
    </location>
    <ligand>
        <name>sn-glycerol 3-phosphate</name>
        <dbReference type="ChEBI" id="CHEBI:57597"/>
    </ligand>
</feature>
<feature type="binding site" evidence="1">
    <location>
        <position position="243"/>
    </location>
    <ligand>
        <name>sn-glycerol 3-phosphate</name>
        <dbReference type="ChEBI" id="CHEBI:57597"/>
    </ligand>
</feature>
<feature type="binding site" evidence="1">
    <location>
        <position position="253"/>
    </location>
    <ligand>
        <name>sn-glycerol 3-phosphate</name>
        <dbReference type="ChEBI" id="CHEBI:57597"/>
    </ligand>
</feature>
<feature type="binding site" evidence="1">
    <location>
        <position position="254"/>
    </location>
    <ligand>
        <name>NADPH</name>
        <dbReference type="ChEBI" id="CHEBI:57783"/>
    </ligand>
</feature>
<feature type="binding site" evidence="1">
    <location>
        <position position="254"/>
    </location>
    <ligand>
        <name>sn-glycerol 3-phosphate</name>
        <dbReference type="ChEBI" id="CHEBI:57597"/>
    </ligand>
</feature>
<feature type="binding site" evidence="1">
    <location>
        <position position="255"/>
    </location>
    <ligand>
        <name>sn-glycerol 3-phosphate</name>
        <dbReference type="ChEBI" id="CHEBI:57597"/>
    </ligand>
</feature>
<feature type="binding site" evidence="1">
    <location>
        <position position="278"/>
    </location>
    <ligand>
        <name>NADPH</name>
        <dbReference type="ChEBI" id="CHEBI:57783"/>
    </ligand>
</feature>
<feature type="binding site" evidence="1">
    <location>
        <position position="280"/>
    </location>
    <ligand>
        <name>NADPH</name>
        <dbReference type="ChEBI" id="CHEBI:57783"/>
    </ligand>
</feature>
<keyword id="KW-0963">Cytoplasm</keyword>
<keyword id="KW-0444">Lipid biosynthesis</keyword>
<keyword id="KW-0443">Lipid metabolism</keyword>
<keyword id="KW-0520">NAD</keyword>
<keyword id="KW-0521">NADP</keyword>
<keyword id="KW-0547">Nucleotide-binding</keyword>
<keyword id="KW-0560">Oxidoreductase</keyword>
<keyword id="KW-0594">Phospholipid biosynthesis</keyword>
<keyword id="KW-1208">Phospholipid metabolism</keyword>
<keyword id="KW-1185">Reference proteome</keyword>
<comment type="function">
    <text evidence="1">Catalyzes the reduction of the glycolytic intermediate dihydroxyacetone phosphate (DHAP) to sn-glycerol 3-phosphate (G3P), the key precursor for phospholipid synthesis.</text>
</comment>
<comment type="catalytic activity">
    <reaction evidence="1">
        <text>sn-glycerol 3-phosphate + NAD(+) = dihydroxyacetone phosphate + NADH + H(+)</text>
        <dbReference type="Rhea" id="RHEA:11092"/>
        <dbReference type="ChEBI" id="CHEBI:15378"/>
        <dbReference type="ChEBI" id="CHEBI:57540"/>
        <dbReference type="ChEBI" id="CHEBI:57597"/>
        <dbReference type="ChEBI" id="CHEBI:57642"/>
        <dbReference type="ChEBI" id="CHEBI:57945"/>
        <dbReference type="EC" id="1.1.1.94"/>
    </reaction>
    <physiologicalReaction direction="right-to-left" evidence="1">
        <dbReference type="Rhea" id="RHEA:11094"/>
    </physiologicalReaction>
</comment>
<comment type="catalytic activity">
    <reaction evidence="1">
        <text>sn-glycerol 3-phosphate + NADP(+) = dihydroxyacetone phosphate + NADPH + H(+)</text>
        <dbReference type="Rhea" id="RHEA:11096"/>
        <dbReference type="ChEBI" id="CHEBI:15378"/>
        <dbReference type="ChEBI" id="CHEBI:57597"/>
        <dbReference type="ChEBI" id="CHEBI:57642"/>
        <dbReference type="ChEBI" id="CHEBI:57783"/>
        <dbReference type="ChEBI" id="CHEBI:58349"/>
        <dbReference type="EC" id="1.1.1.94"/>
    </reaction>
    <physiologicalReaction direction="right-to-left" evidence="1">
        <dbReference type="Rhea" id="RHEA:11098"/>
    </physiologicalReaction>
</comment>
<comment type="pathway">
    <text evidence="1">Membrane lipid metabolism; glycerophospholipid metabolism.</text>
</comment>
<comment type="subcellular location">
    <subcellularLocation>
        <location evidence="1">Cytoplasm</location>
    </subcellularLocation>
</comment>
<comment type="similarity">
    <text evidence="1">Belongs to the NAD-dependent glycerol-3-phosphate dehydrogenase family.</text>
</comment>
<gene>
    <name evidence="1" type="primary">gpsA2</name>
    <name type="ordered locus">MAP_4061c</name>
</gene>
<dbReference type="EC" id="1.1.1.94" evidence="1"/>
<dbReference type="EMBL" id="AE016958">
    <property type="protein sequence ID" value="AAS06611.1"/>
    <property type="molecule type" value="Genomic_DNA"/>
</dbReference>
<dbReference type="RefSeq" id="WP_003879359.1">
    <property type="nucleotide sequence ID" value="NZ_CP106873.1"/>
</dbReference>
<dbReference type="SMR" id="P61744"/>
<dbReference type="STRING" id="262316.MAP_4061c"/>
<dbReference type="KEGG" id="mpa:MAP_4061c"/>
<dbReference type="PATRIC" id="fig|262316.17.peg.4325"/>
<dbReference type="eggNOG" id="COG0240">
    <property type="taxonomic scope" value="Bacteria"/>
</dbReference>
<dbReference type="HOGENOM" id="CLU_033449_0_2_11"/>
<dbReference type="UniPathway" id="UPA00940"/>
<dbReference type="Proteomes" id="UP000000580">
    <property type="component" value="Chromosome"/>
</dbReference>
<dbReference type="GO" id="GO:0005829">
    <property type="term" value="C:cytosol"/>
    <property type="evidence" value="ECO:0007669"/>
    <property type="project" value="TreeGrafter"/>
</dbReference>
<dbReference type="GO" id="GO:0047952">
    <property type="term" value="F:glycerol-3-phosphate dehydrogenase [NAD(P)+] activity"/>
    <property type="evidence" value="ECO:0007669"/>
    <property type="project" value="UniProtKB-UniRule"/>
</dbReference>
<dbReference type="GO" id="GO:0051287">
    <property type="term" value="F:NAD binding"/>
    <property type="evidence" value="ECO:0007669"/>
    <property type="project" value="InterPro"/>
</dbReference>
<dbReference type="GO" id="GO:0005975">
    <property type="term" value="P:carbohydrate metabolic process"/>
    <property type="evidence" value="ECO:0007669"/>
    <property type="project" value="InterPro"/>
</dbReference>
<dbReference type="GO" id="GO:0046167">
    <property type="term" value="P:glycerol-3-phosphate biosynthetic process"/>
    <property type="evidence" value="ECO:0007669"/>
    <property type="project" value="UniProtKB-UniRule"/>
</dbReference>
<dbReference type="GO" id="GO:0046168">
    <property type="term" value="P:glycerol-3-phosphate catabolic process"/>
    <property type="evidence" value="ECO:0007669"/>
    <property type="project" value="InterPro"/>
</dbReference>
<dbReference type="GO" id="GO:0006650">
    <property type="term" value="P:glycerophospholipid metabolic process"/>
    <property type="evidence" value="ECO:0007669"/>
    <property type="project" value="UniProtKB-UniRule"/>
</dbReference>
<dbReference type="GO" id="GO:0008654">
    <property type="term" value="P:phospholipid biosynthetic process"/>
    <property type="evidence" value="ECO:0007669"/>
    <property type="project" value="UniProtKB-KW"/>
</dbReference>
<dbReference type="FunFam" id="3.40.50.720:FF:000384">
    <property type="entry name" value="Glycerol-3-phosphate dehydrogenase [NAD(P)+]"/>
    <property type="match status" value="1"/>
</dbReference>
<dbReference type="Gene3D" id="1.10.1040.10">
    <property type="entry name" value="N-(1-d-carboxylethyl)-l-norvaline Dehydrogenase, domain 2"/>
    <property type="match status" value="1"/>
</dbReference>
<dbReference type="Gene3D" id="3.40.50.720">
    <property type="entry name" value="NAD(P)-binding Rossmann-like Domain"/>
    <property type="match status" value="1"/>
</dbReference>
<dbReference type="HAMAP" id="MF_00394">
    <property type="entry name" value="NAD_Glyc3P_dehydrog"/>
    <property type="match status" value="1"/>
</dbReference>
<dbReference type="InterPro" id="IPR008927">
    <property type="entry name" value="6-PGluconate_DH-like_C_sf"/>
</dbReference>
<dbReference type="InterPro" id="IPR013328">
    <property type="entry name" value="6PGD_dom2"/>
</dbReference>
<dbReference type="InterPro" id="IPR006168">
    <property type="entry name" value="G3P_DH_NAD-dep"/>
</dbReference>
<dbReference type="InterPro" id="IPR006109">
    <property type="entry name" value="G3P_DH_NAD-dep_C"/>
</dbReference>
<dbReference type="InterPro" id="IPR011128">
    <property type="entry name" value="G3P_DH_NAD-dep_N"/>
</dbReference>
<dbReference type="InterPro" id="IPR036291">
    <property type="entry name" value="NAD(P)-bd_dom_sf"/>
</dbReference>
<dbReference type="NCBIfam" id="NF000940">
    <property type="entry name" value="PRK00094.1-2"/>
    <property type="match status" value="1"/>
</dbReference>
<dbReference type="NCBIfam" id="NF000942">
    <property type="entry name" value="PRK00094.1-4"/>
    <property type="match status" value="1"/>
</dbReference>
<dbReference type="NCBIfam" id="NF009098">
    <property type="entry name" value="PRK12439.1"/>
    <property type="match status" value="1"/>
</dbReference>
<dbReference type="PANTHER" id="PTHR11728">
    <property type="entry name" value="GLYCEROL-3-PHOSPHATE DEHYDROGENASE"/>
    <property type="match status" value="1"/>
</dbReference>
<dbReference type="PANTHER" id="PTHR11728:SF1">
    <property type="entry name" value="GLYCEROL-3-PHOSPHATE DEHYDROGENASE [NAD(+)] 2, CHLOROPLASTIC"/>
    <property type="match status" value="1"/>
</dbReference>
<dbReference type="Pfam" id="PF07479">
    <property type="entry name" value="NAD_Gly3P_dh_C"/>
    <property type="match status" value="1"/>
</dbReference>
<dbReference type="Pfam" id="PF01210">
    <property type="entry name" value="NAD_Gly3P_dh_N"/>
    <property type="match status" value="1"/>
</dbReference>
<dbReference type="PIRSF" id="PIRSF000114">
    <property type="entry name" value="Glycerol-3-P_dh"/>
    <property type="match status" value="1"/>
</dbReference>
<dbReference type="PRINTS" id="PR00077">
    <property type="entry name" value="GPDHDRGNASE"/>
</dbReference>
<dbReference type="SUPFAM" id="SSF48179">
    <property type="entry name" value="6-phosphogluconate dehydrogenase C-terminal domain-like"/>
    <property type="match status" value="1"/>
</dbReference>
<dbReference type="SUPFAM" id="SSF51735">
    <property type="entry name" value="NAD(P)-binding Rossmann-fold domains"/>
    <property type="match status" value="1"/>
</dbReference>
<dbReference type="PROSITE" id="PS00957">
    <property type="entry name" value="NAD_G3PDH"/>
    <property type="match status" value="1"/>
</dbReference>